<sequence length="160" mass="20088">MMERMHNLNNVYLKECIHFLDSCINALKEFDLRTFISRFYYGMLYLLNAFEFYIRENIEDWHNKDRYANFSKKIRNFLMDLKLYRHASDYILSPRLEHGKHYEEHWEEFKESYLKLKFFHYLHILRQELYSYRHNQLIAIIIEKLEIIEKLLKLYIMLEE</sequence>
<reference key="1">
    <citation type="journal article" date="1996" name="Science">
        <title>Complete genome sequence of the methanogenic archaeon, Methanococcus jannaschii.</title>
        <authorList>
            <person name="Bult C.J."/>
            <person name="White O."/>
            <person name="Olsen G.J."/>
            <person name="Zhou L."/>
            <person name="Fleischmann R.D."/>
            <person name="Sutton G.G."/>
            <person name="Blake J.A."/>
            <person name="FitzGerald L.M."/>
            <person name="Clayton R.A."/>
            <person name="Gocayne J.D."/>
            <person name="Kerlavage A.R."/>
            <person name="Dougherty B.A."/>
            <person name="Tomb J.-F."/>
            <person name="Adams M.D."/>
            <person name="Reich C.I."/>
            <person name="Overbeek R."/>
            <person name="Kirkness E.F."/>
            <person name="Weinstock K.G."/>
            <person name="Merrick J.M."/>
            <person name="Glodek A."/>
            <person name="Scott J.L."/>
            <person name="Geoghagen N.S.M."/>
            <person name="Weidman J.F."/>
            <person name="Fuhrmann J.L."/>
            <person name="Nguyen D."/>
            <person name="Utterback T.R."/>
            <person name="Kelley J.M."/>
            <person name="Peterson J.D."/>
            <person name="Sadow P.W."/>
            <person name="Hanna M.C."/>
            <person name="Cotton M.D."/>
            <person name="Roberts K.M."/>
            <person name="Hurst M.A."/>
            <person name="Kaine B.P."/>
            <person name="Borodovsky M."/>
            <person name="Klenk H.-P."/>
            <person name="Fraser C.M."/>
            <person name="Smith H.O."/>
            <person name="Woese C.R."/>
            <person name="Venter J.C."/>
        </authorList>
    </citation>
    <scope>NUCLEOTIDE SEQUENCE [LARGE SCALE GENOMIC DNA]</scope>
    <source>
        <strain>ATCC 43067 / DSM 2661 / JAL-1 / JCM 10045 / NBRC 100440</strain>
    </source>
</reference>
<feature type="chain" id="PRO_0000106872" description="Uncharacterized protein MJ0427">
    <location>
        <begin position="1"/>
        <end position="160"/>
    </location>
</feature>
<proteinExistence type="predicted"/>
<accession>Q57870</accession>
<protein>
    <recommendedName>
        <fullName>Uncharacterized protein MJ0427</fullName>
    </recommendedName>
</protein>
<keyword id="KW-1185">Reference proteome</keyword>
<dbReference type="EMBL" id="L77117">
    <property type="protein sequence ID" value="AAB98420.1"/>
    <property type="molecule type" value="Genomic_DNA"/>
</dbReference>
<dbReference type="PIR" id="C64353">
    <property type="entry name" value="C64353"/>
</dbReference>
<dbReference type="STRING" id="243232.MJ_0427"/>
<dbReference type="PaxDb" id="243232-MJ_0427"/>
<dbReference type="EnsemblBacteria" id="AAB98420">
    <property type="protein sequence ID" value="AAB98420"/>
    <property type="gene ID" value="MJ_0427"/>
</dbReference>
<dbReference type="KEGG" id="mja:MJ_0427"/>
<dbReference type="eggNOG" id="arCOG08291">
    <property type="taxonomic scope" value="Archaea"/>
</dbReference>
<dbReference type="HOGENOM" id="CLU_1656898_0_0_2"/>
<dbReference type="InParanoid" id="Q57870"/>
<dbReference type="Proteomes" id="UP000000805">
    <property type="component" value="Chromosome"/>
</dbReference>
<dbReference type="Gene3D" id="1.20.120.330">
    <property type="entry name" value="Nucleotidyltransferases domain 2"/>
    <property type="match status" value="1"/>
</dbReference>
<name>Y427_METJA</name>
<gene>
    <name type="ordered locus">MJ0427</name>
</gene>
<organism>
    <name type="scientific">Methanocaldococcus jannaschii (strain ATCC 43067 / DSM 2661 / JAL-1 / JCM 10045 / NBRC 100440)</name>
    <name type="common">Methanococcus jannaschii</name>
    <dbReference type="NCBI Taxonomy" id="243232"/>
    <lineage>
        <taxon>Archaea</taxon>
        <taxon>Methanobacteriati</taxon>
        <taxon>Methanobacteriota</taxon>
        <taxon>Methanomada group</taxon>
        <taxon>Methanococci</taxon>
        <taxon>Methanococcales</taxon>
        <taxon>Methanocaldococcaceae</taxon>
        <taxon>Methanocaldococcus</taxon>
    </lineage>
</organism>